<sequence>MKENLTNLFEKVIKLPTTSGCYKMLNENKKILYIGKAKNLRSRVKSYFLEKNSHKIKILMKNVKSIEVITTNSEYEALLLECNLIKTHKPDYNVKLKDGKGYPMVRITHEKYPRIFKTRKIINDKSEYFGPFTNVKKLDQVLDFINKTFKIRKCKKKSNAPCLYYHMGQCLGVCYKENLEKEYQKELDKAKSILNGNISEISSQIDIKLKHAIQKEDFETAIKLKEIRNSLIEINQIQIVTKTNNLNIDYVHVHPGENVNTIIVLKYRNGKLVERDANFDESICKENELILQFLIQYYTSINMIVPDKIHIFLKDIDTKNVEKLINEIKNTKTEIIYKETEEILKIMEMAISNAELSLREYENKSTKALESLKIVLEMDKLPKIIEGFDIAHLKGQETVASMVTFKMGMPFKENYRLYKLNSLLKGEIDDFKAIKEVISRRYSEIINNNLELPNLILIDGGKGQLNAALSILKGLKIENKVKVCSLAKKQETIFLTTNKKGINLPQGHPALRILQNVRDEAHRKANGFNKKRREKITLLYTKIHGIGEKTAQKILKSIGTYKDILPLSENEISEKIKVNVQLAKRIKEFAIKENSIKNNNQDK</sequence>
<reference key="1">
    <citation type="journal article" date="1997" name="Nature">
        <title>Genomic sequence of a Lyme disease spirochaete, Borrelia burgdorferi.</title>
        <authorList>
            <person name="Fraser C.M."/>
            <person name="Casjens S."/>
            <person name="Huang W.M."/>
            <person name="Sutton G.G."/>
            <person name="Clayton R.A."/>
            <person name="Lathigra R."/>
            <person name="White O."/>
            <person name="Ketchum K.A."/>
            <person name="Dodson R.J."/>
            <person name="Hickey E.K."/>
            <person name="Gwinn M.L."/>
            <person name="Dougherty B.A."/>
            <person name="Tomb J.-F."/>
            <person name="Fleischmann R.D."/>
            <person name="Richardson D.L."/>
            <person name="Peterson J.D."/>
            <person name="Kerlavage A.R."/>
            <person name="Quackenbush J."/>
            <person name="Salzberg S.L."/>
            <person name="Hanson M."/>
            <person name="van Vugt R."/>
            <person name="Palmer N."/>
            <person name="Adams M.D."/>
            <person name="Gocayne J.D."/>
            <person name="Weidman J.F."/>
            <person name="Utterback T.R."/>
            <person name="Watthey L."/>
            <person name="McDonald L.A."/>
            <person name="Artiach P."/>
            <person name="Bowman C."/>
            <person name="Garland S.A."/>
            <person name="Fujii C."/>
            <person name="Cotton M.D."/>
            <person name="Horst K."/>
            <person name="Roberts K.M."/>
            <person name="Hatch B."/>
            <person name="Smith H.O."/>
            <person name="Venter J.C."/>
        </authorList>
    </citation>
    <scope>NUCLEOTIDE SEQUENCE [LARGE SCALE GENOMIC DNA]</scope>
    <source>
        <strain>ATCC 35210 / DSM 4680 / CIP 102532 / B31</strain>
    </source>
</reference>
<proteinExistence type="inferred from homology"/>
<dbReference type="EMBL" id="AE000783">
    <property type="protein sequence ID" value="AAC66813.2"/>
    <property type="status" value="ALT_INIT"/>
    <property type="molecule type" value="Genomic_DNA"/>
</dbReference>
<dbReference type="PIR" id="H70156">
    <property type="entry name" value="H70156"/>
</dbReference>
<dbReference type="RefSeq" id="NP_212591.2">
    <property type="nucleotide sequence ID" value="NC_001318.1"/>
</dbReference>
<dbReference type="RefSeq" id="WP_002657940.1">
    <property type="nucleotide sequence ID" value="NC_001318.1"/>
</dbReference>
<dbReference type="SMR" id="O51413"/>
<dbReference type="STRING" id="224326.BB_0457"/>
<dbReference type="PaxDb" id="224326-BB_0457"/>
<dbReference type="EnsemblBacteria" id="AAC66813">
    <property type="protein sequence ID" value="AAC66813"/>
    <property type="gene ID" value="BB_0457"/>
</dbReference>
<dbReference type="GeneID" id="56567889"/>
<dbReference type="KEGG" id="bbu:BB_0457"/>
<dbReference type="PATRIC" id="fig|224326.49.peg.849"/>
<dbReference type="HOGENOM" id="CLU_014841_3_2_12"/>
<dbReference type="OrthoDB" id="9804933at2"/>
<dbReference type="Proteomes" id="UP000001807">
    <property type="component" value="Chromosome"/>
</dbReference>
<dbReference type="GO" id="GO:0005737">
    <property type="term" value="C:cytoplasm"/>
    <property type="evidence" value="ECO:0007669"/>
    <property type="project" value="UniProtKB-SubCell"/>
</dbReference>
<dbReference type="GO" id="GO:0009380">
    <property type="term" value="C:excinuclease repair complex"/>
    <property type="evidence" value="ECO:0007669"/>
    <property type="project" value="InterPro"/>
</dbReference>
<dbReference type="GO" id="GO:0003677">
    <property type="term" value="F:DNA binding"/>
    <property type="evidence" value="ECO:0007669"/>
    <property type="project" value="UniProtKB-UniRule"/>
</dbReference>
<dbReference type="GO" id="GO:0009381">
    <property type="term" value="F:excinuclease ABC activity"/>
    <property type="evidence" value="ECO:0007669"/>
    <property type="project" value="UniProtKB-UniRule"/>
</dbReference>
<dbReference type="GO" id="GO:0006289">
    <property type="term" value="P:nucleotide-excision repair"/>
    <property type="evidence" value="ECO:0007669"/>
    <property type="project" value="UniProtKB-UniRule"/>
</dbReference>
<dbReference type="GO" id="GO:0009432">
    <property type="term" value="P:SOS response"/>
    <property type="evidence" value="ECO:0007669"/>
    <property type="project" value="UniProtKB-UniRule"/>
</dbReference>
<dbReference type="CDD" id="cd10434">
    <property type="entry name" value="GIY-YIG_UvrC_Cho"/>
    <property type="match status" value="1"/>
</dbReference>
<dbReference type="FunFam" id="3.40.1440.10:FF:000001">
    <property type="entry name" value="UvrABC system protein C"/>
    <property type="match status" value="1"/>
</dbReference>
<dbReference type="Gene3D" id="1.10.150.20">
    <property type="entry name" value="5' to 3' exonuclease, C-terminal subdomain"/>
    <property type="match status" value="1"/>
</dbReference>
<dbReference type="Gene3D" id="3.40.1440.10">
    <property type="entry name" value="GIY-YIG endonuclease"/>
    <property type="match status" value="1"/>
</dbReference>
<dbReference type="Gene3D" id="3.30.420.340">
    <property type="entry name" value="UvrC, RNAse H endonuclease domain"/>
    <property type="match status" value="1"/>
</dbReference>
<dbReference type="HAMAP" id="MF_00203">
    <property type="entry name" value="UvrC"/>
    <property type="match status" value="1"/>
</dbReference>
<dbReference type="InterPro" id="IPR000305">
    <property type="entry name" value="GIY-YIG_endonuc"/>
</dbReference>
<dbReference type="InterPro" id="IPR035901">
    <property type="entry name" value="GIY-YIG_endonuc_sf"/>
</dbReference>
<dbReference type="InterPro" id="IPR047296">
    <property type="entry name" value="GIY-YIG_UvrC_Cho"/>
</dbReference>
<dbReference type="InterPro" id="IPR010994">
    <property type="entry name" value="RuvA_2-like"/>
</dbReference>
<dbReference type="InterPro" id="IPR050066">
    <property type="entry name" value="UvrABC_protein_C"/>
</dbReference>
<dbReference type="InterPro" id="IPR004791">
    <property type="entry name" value="UvrC"/>
</dbReference>
<dbReference type="InterPro" id="IPR001162">
    <property type="entry name" value="UvrC_RNase_H_dom"/>
</dbReference>
<dbReference type="InterPro" id="IPR038476">
    <property type="entry name" value="UvrC_RNase_H_dom_sf"/>
</dbReference>
<dbReference type="NCBIfam" id="NF011264">
    <property type="entry name" value="PRK14670.1"/>
    <property type="match status" value="1"/>
</dbReference>
<dbReference type="NCBIfam" id="TIGR00194">
    <property type="entry name" value="uvrC"/>
    <property type="match status" value="1"/>
</dbReference>
<dbReference type="PANTHER" id="PTHR30562:SF1">
    <property type="entry name" value="UVRABC SYSTEM PROTEIN C"/>
    <property type="match status" value="1"/>
</dbReference>
<dbReference type="PANTHER" id="PTHR30562">
    <property type="entry name" value="UVRC/OXIDOREDUCTASE"/>
    <property type="match status" value="1"/>
</dbReference>
<dbReference type="Pfam" id="PF01541">
    <property type="entry name" value="GIY-YIG"/>
    <property type="match status" value="1"/>
</dbReference>
<dbReference type="Pfam" id="PF14520">
    <property type="entry name" value="HHH_5"/>
    <property type="match status" value="1"/>
</dbReference>
<dbReference type="Pfam" id="PF22920">
    <property type="entry name" value="UvrC_RNaseH"/>
    <property type="match status" value="1"/>
</dbReference>
<dbReference type="Pfam" id="PF08459">
    <property type="entry name" value="UvrC_RNaseH_dom"/>
    <property type="match status" value="1"/>
</dbReference>
<dbReference type="SMART" id="SM00465">
    <property type="entry name" value="GIYc"/>
    <property type="match status" value="1"/>
</dbReference>
<dbReference type="SUPFAM" id="SSF82771">
    <property type="entry name" value="GIY-YIG endonuclease"/>
    <property type="match status" value="1"/>
</dbReference>
<dbReference type="SUPFAM" id="SSF47781">
    <property type="entry name" value="RuvA domain 2-like"/>
    <property type="match status" value="1"/>
</dbReference>
<dbReference type="PROSITE" id="PS50164">
    <property type="entry name" value="GIY_YIG"/>
    <property type="match status" value="1"/>
</dbReference>
<dbReference type="PROSITE" id="PS50165">
    <property type="entry name" value="UVRC"/>
    <property type="match status" value="1"/>
</dbReference>
<organism>
    <name type="scientific">Borreliella burgdorferi (strain ATCC 35210 / DSM 4680 / CIP 102532 / B31)</name>
    <name type="common">Borrelia burgdorferi</name>
    <dbReference type="NCBI Taxonomy" id="224326"/>
    <lineage>
        <taxon>Bacteria</taxon>
        <taxon>Pseudomonadati</taxon>
        <taxon>Spirochaetota</taxon>
        <taxon>Spirochaetia</taxon>
        <taxon>Spirochaetales</taxon>
        <taxon>Borreliaceae</taxon>
        <taxon>Borreliella</taxon>
    </lineage>
</organism>
<name>UVRC_BORBU</name>
<gene>
    <name evidence="1" type="primary">uvrC</name>
    <name type="ordered locus">BB_0457</name>
</gene>
<protein>
    <recommendedName>
        <fullName evidence="1">UvrABC system protein C</fullName>
        <shortName evidence="1">Protein UvrC</shortName>
    </recommendedName>
    <alternativeName>
        <fullName evidence="1">Excinuclease ABC subunit C</fullName>
    </alternativeName>
</protein>
<comment type="function">
    <text evidence="1">The UvrABC repair system catalyzes the recognition and processing of DNA lesions. UvrC both incises the 5' and 3' sides of the lesion. The N-terminal half is responsible for the 3' incision and the C-terminal half is responsible for the 5' incision.</text>
</comment>
<comment type="subunit">
    <text evidence="1">Interacts with UvrB in an incision complex.</text>
</comment>
<comment type="subcellular location">
    <subcellularLocation>
        <location evidence="1">Cytoplasm</location>
    </subcellularLocation>
</comment>
<comment type="similarity">
    <text evidence="1">Belongs to the UvrC family.</text>
</comment>
<comment type="sequence caution" evidence="2">
    <conflict type="erroneous initiation">
        <sequence resource="EMBL-CDS" id="AAC66813"/>
    </conflict>
    <text>Truncated N-terminus.</text>
</comment>
<feature type="chain" id="PRO_0000138289" description="UvrABC system protein C">
    <location>
        <begin position="1"/>
        <end position="603"/>
    </location>
</feature>
<feature type="domain" description="GIY-YIG" evidence="1">
    <location>
        <begin position="17"/>
        <end position="94"/>
    </location>
</feature>
<evidence type="ECO:0000255" key="1">
    <source>
        <dbReference type="HAMAP-Rule" id="MF_00203"/>
    </source>
</evidence>
<evidence type="ECO:0000305" key="2"/>
<keyword id="KW-0963">Cytoplasm</keyword>
<keyword id="KW-0227">DNA damage</keyword>
<keyword id="KW-0228">DNA excision</keyword>
<keyword id="KW-0234">DNA repair</keyword>
<keyword id="KW-0267">Excision nuclease</keyword>
<keyword id="KW-1185">Reference proteome</keyword>
<keyword id="KW-0742">SOS response</keyword>
<accession>O51413</accession>